<reference key="1">
    <citation type="journal article" date="2005" name="Nat. Biotechnol.">
        <title>The genome sequence of the ethanologenic bacterium Zymomonas mobilis ZM4.</title>
        <authorList>
            <person name="Seo J.-S."/>
            <person name="Chong H."/>
            <person name="Park H.S."/>
            <person name="Yoon K.-O."/>
            <person name="Jung C."/>
            <person name="Kim J.J."/>
            <person name="Hong J.H."/>
            <person name="Kim H."/>
            <person name="Kim J.-H."/>
            <person name="Kil J.-I."/>
            <person name="Park C.J."/>
            <person name="Oh H.-M."/>
            <person name="Lee J.-S."/>
            <person name="Jin S.-J."/>
            <person name="Um H.-W."/>
            <person name="Lee H.-J."/>
            <person name="Oh S.-J."/>
            <person name="Kim J.Y."/>
            <person name="Kang H.L."/>
            <person name="Lee S.Y."/>
            <person name="Lee K.J."/>
            <person name="Kang H.S."/>
        </authorList>
    </citation>
    <scope>NUCLEOTIDE SEQUENCE [LARGE SCALE GENOMIC DNA]</scope>
    <source>
        <strain>ATCC 31821 / ZM4 / CP4</strain>
    </source>
</reference>
<sequence>MKAVKIVEGRAYPLGESNIDTDIIIPAHYLKTTDRKGLAKGAFETIRAKEGNVFDNPEYKGAPILIAGDNFGCGSSREHAAWAIKEMGVEAVIAPRFSDIFSGNAFKNGLLTVVLPEADVERLLEVAKTDPITLDLENQVVTTPFQDRFHFDIDPFRKRCLLEGLDEIGLTLKDQDKISQYEDVLASDRPWV</sequence>
<keyword id="KW-0028">Amino-acid biosynthesis</keyword>
<keyword id="KW-0100">Branched-chain amino acid biosynthesis</keyword>
<keyword id="KW-0432">Leucine biosynthesis</keyword>
<keyword id="KW-0456">Lyase</keyword>
<keyword id="KW-1185">Reference proteome</keyword>
<organism>
    <name type="scientific">Zymomonas mobilis subsp. mobilis (strain ATCC 31821 / ZM4 / CP4)</name>
    <dbReference type="NCBI Taxonomy" id="264203"/>
    <lineage>
        <taxon>Bacteria</taxon>
        <taxon>Pseudomonadati</taxon>
        <taxon>Pseudomonadota</taxon>
        <taxon>Alphaproteobacteria</taxon>
        <taxon>Sphingomonadales</taxon>
        <taxon>Zymomonadaceae</taxon>
        <taxon>Zymomonas</taxon>
    </lineage>
</organism>
<evidence type="ECO:0000255" key="1">
    <source>
        <dbReference type="HAMAP-Rule" id="MF_01031"/>
    </source>
</evidence>
<accession>Q5NRC4</accession>
<gene>
    <name evidence="1" type="primary">leuD</name>
    <name type="ordered locus">ZMO0106</name>
</gene>
<feature type="chain" id="PRO_0000141919" description="3-isopropylmalate dehydratase small subunit">
    <location>
        <begin position="1"/>
        <end position="192"/>
    </location>
</feature>
<dbReference type="EC" id="4.2.1.33" evidence="1"/>
<dbReference type="EMBL" id="AE008692">
    <property type="protein sequence ID" value="AAV88730.1"/>
    <property type="molecule type" value="Genomic_DNA"/>
</dbReference>
<dbReference type="RefSeq" id="WP_011240075.1">
    <property type="nucleotide sequence ID" value="NZ_CP035711.1"/>
</dbReference>
<dbReference type="SMR" id="Q5NRC4"/>
<dbReference type="STRING" id="264203.ZMO0106"/>
<dbReference type="KEGG" id="zmo:ZMO0106"/>
<dbReference type="eggNOG" id="COG0066">
    <property type="taxonomic scope" value="Bacteria"/>
</dbReference>
<dbReference type="HOGENOM" id="CLU_081378_0_1_5"/>
<dbReference type="UniPathway" id="UPA00048">
    <property type="reaction ID" value="UER00071"/>
</dbReference>
<dbReference type="Proteomes" id="UP000001173">
    <property type="component" value="Chromosome"/>
</dbReference>
<dbReference type="GO" id="GO:0009316">
    <property type="term" value="C:3-isopropylmalate dehydratase complex"/>
    <property type="evidence" value="ECO:0007669"/>
    <property type="project" value="InterPro"/>
</dbReference>
<dbReference type="GO" id="GO:0003861">
    <property type="term" value="F:3-isopropylmalate dehydratase activity"/>
    <property type="evidence" value="ECO:0007669"/>
    <property type="project" value="UniProtKB-UniRule"/>
</dbReference>
<dbReference type="GO" id="GO:0009098">
    <property type="term" value="P:L-leucine biosynthetic process"/>
    <property type="evidence" value="ECO:0007669"/>
    <property type="project" value="UniProtKB-UniRule"/>
</dbReference>
<dbReference type="CDD" id="cd01577">
    <property type="entry name" value="IPMI_Swivel"/>
    <property type="match status" value="1"/>
</dbReference>
<dbReference type="Gene3D" id="3.20.19.10">
    <property type="entry name" value="Aconitase, domain 4"/>
    <property type="match status" value="1"/>
</dbReference>
<dbReference type="HAMAP" id="MF_01031">
    <property type="entry name" value="LeuD_type1"/>
    <property type="match status" value="1"/>
</dbReference>
<dbReference type="InterPro" id="IPR004431">
    <property type="entry name" value="3-IsopropMal_deHydase_ssu"/>
</dbReference>
<dbReference type="InterPro" id="IPR015928">
    <property type="entry name" value="Aconitase/3IPM_dehydase_swvl"/>
</dbReference>
<dbReference type="InterPro" id="IPR000573">
    <property type="entry name" value="AconitaseA/IPMdHydase_ssu_swvl"/>
</dbReference>
<dbReference type="InterPro" id="IPR033940">
    <property type="entry name" value="IPMI_Swivel"/>
</dbReference>
<dbReference type="InterPro" id="IPR050075">
    <property type="entry name" value="LeuD"/>
</dbReference>
<dbReference type="NCBIfam" id="TIGR00171">
    <property type="entry name" value="leuD"/>
    <property type="match status" value="1"/>
</dbReference>
<dbReference type="NCBIfam" id="NF002458">
    <property type="entry name" value="PRK01641.1"/>
    <property type="match status" value="1"/>
</dbReference>
<dbReference type="PANTHER" id="PTHR43345:SF5">
    <property type="entry name" value="3-ISOPROPYLMALATE DEHYDRATASE SMALL SUBUNIT"/>
    <property type="match status" value="1"/>
</dbReference>
<dbReference type="PANTHER" id="PTHR43345">
    <property type="entry name" value="3-ISOPROPYLMALATE DEHYDRATASE SMALL SUBUNIT 2-RELATED-RELATED"/>
    <property type="match status" value="1"/>
</dbReference>
<dbReference type="Pfam" id="PF00694">
    <property type="entry name" value="Aconitase_C"/>
    <property type="match status" value="1"/>
</dbReference>
<dbReference type="SUPFAM" id="SSF52016">
    <property type="entry name" value="LeuD/IlvD-like"/>
    <property type="match status" value="1"/>
</dbReference>
<comment type="function">
    <text evidence="1">Catalyzes the isomerization between 2-isopropylmalate and 3-isopropylmalate, via the formation of 2-isopropylmaleate.</text>
</comment>
<comment type="catalytic activity">
    <reaction evidence="1">
        <text>(2R,3S)-3-isopropylmalate = (2S)-2-isopropylmalate</text>
        <dbReference type="Rhea" id="RHEA:32287"/>
        <dbReference type="ChEBI" id="CHEBI:1178"/>
        <dbReference type="ChEBI" id="CHEBI:35121"/>
        <dbReference type="EC" id="4.2.1.33"/>
    </reaction>
</comment>
<comment type="pathway">
    <text evidence="1">Amino-acid biosynthesis; L-leucine biosynthesis; L-leucine from 3-methyl-2-oxobutanoate: step 2/4.</text>
</comment>
<comment type="subunit">
    <text evidence="1">Heterodimer of LeuC and LeuD.</text>
</comment>
<comment type="similarity">
    <text evidence="1">Belongs to the LeuD family. LeuD type 1 subfamily.</text>
</comment>
<name>LEUD_ZYMMO</name>
<protein>
    <recommendedName>
        <fullName evidence="1">3-isopropylmalate dehydratase small subunit</fullName>
        <ecNumber evidence="1">4.2.1.33</ecNumber>
    </recommendedName>
    <alternativeName>
        <fullName evidence="1">Alpha-IPM isomerase</fullName>
        <shortName evidence="1">IPMI</shortName>
    </alternativeName>
    <alternativeName>
        <fullName evidence="1">Isopropylmalate isomerase</fullName>
    </alternativeName>
</protein>
<proteinExistence type="inferred from homology"/>